<dbReference type="EC" id="7.1.2.2" evidence="1"/>
<dbReference type="EMBL" id="AP008232">
    <property type="protein sequence ID" value="BAE75689.1"/>
    <property type="molecule type" value="Genomic_DNA"/>
</dbReference>
<dbReference type="RefSeq" id="WP_011412219.1">
    <property type="nucleotide sequence ID" value="NZ_LN854557.1"/>
</dbReference>
<dbReference type="SMR" id="Q2NQ86"/>
<dbReference type="STRING" id="343509.SG2414"/>
<dbReference type="KEGG" id="sgl:SG2414"/>
<dbReference type="eggNOG" id="COG0055">
    <property type="taxonomic scope" value="Bacteria"/>
</dbReference>
<dbReference type="HOGENOM" id="CLU_022398_0_2_6"/>
<dbReference type="OrthoDB" id="9801639at2"/>
<dbReference type="BioCyc" id="SGLO343509:SGP1_RS21885-MONOMER"/>
<dbReference type="Proteomes" id="UP000001932">
    <property type="component" value="Chromosome"/>
</dbReference>
<dbReference type="GO" id="GO:0005886">
    <property type="term" value="C:plasma membrane"/>
    <property type="evidence" value="ECO:0007669"/>
    <property type="project" value="UniProtKB-SubCell"/>
</dbReference>
<dbReference type="GO" id="GO:0045259">
    <property type="term" value="C:proton-transporting ATP synthase complex"/>
    <property type="evidence" value="ECO:0007669"/>
    <property type="project" value="UniProtKB-KW"/>
</dbReference>
<dbReference type="GO" id="GO:0005524">
    <property type="term" value="F:ATP binding"/>
    <property type="evidence" value="ECO:0007669"/>
    <property type="project" value="UniProtKB-UniRule"/>
</dbReference>
<dbReference type="GO" id="GO:0016887">
    <property type="term" value="F:ATP hydrolysis activity"/>
    <property type="evidence" value="ECO:0007669"/>
    <property type="project" value="InterPro"/>
</dbReference>
<dbReference type="GO" id="GO:0046933">
    <property type="term" value="F:proton-transporting ATP synthase activity, rotational mechanism"/>
    <property type="evidence" value="ECO:0007669"/>
    <property type="project" value="UniProtKB-UniRule"/>
</dbReference>
<dbReference type="CDD" id="cd18110">
    <property type="entry name" value="ATP-synt_F1_beta_C"/>
    <property type="match status" value="1"/>
</dbReference>
<dbReference type="CDD" id="cd18115">
    <property type="entry name" value="ATP-synt_F1_beta_N"/>
    <property type="match status" value="1"/>
</dbReference>
<dbReference type="CDD" id="cd01133">
    <property type="entry name" value="F1-ATPase_beta_CD"/>
    <property type="match status" value="1"/>
</dbReference>
<dbReference type="FunFam" id="1.10.1140.10:FF:000001">
    <property type="entry name" value="ATP synthase subunit beta"/>
    <property type="match status" value="1"/>
</dbReference>
<dbReference type="FunFam" id="2.40.10.170:FF:000003">
    <property type="entry name" value="ATP synthase subunit beta"/>
    <property type="match status" value="1"/>
</dbReference>
<dbReference type="FunFam" id="3.40.50.300:FF:000004">
    <property type="entry name" value="ATP synthase subunit beta"/>
    <property type="match status" value="1"/>
</dbReference>
<dbReference type="Gene3D" id="2.40.10.170">
    <property type="match status" value="1"/>
</dbReference>
<dbReference type="Gene3D" id="1.10.1140.10">
    <property type="entry name" value="Bovine Mitochondrial F1-atpase, Atp Synthase Beta Chain, Chain D, domain 3"/>
    <property type="match status" value="1"/>
</dbReference>
<dbReference type="Gene3D" id="3.40.50.300">
    <property type="entry name" value="P-loop containing nucleotide triphosphate hydrolases"/>
    <property type="match status" value="1"/>
</dbReference>
<dbReference type="HAMAP" id="MF_01347">
    <property type="entry name" value="ATP_synth_beta_bact"/>
    <property type="match status" value="1"/>
</dbReference>
<dbReference type="InterPro" id="IPR003593">
    <property type="entry name" value="AAA+_ATPase"/>
</dbReference>
<dbReference type="InterPro" id="IPR055190">
    <property type="entry name" value="ATP-synt_VA_C"/>
</dbReference>
<dbReference type="InterPro" id="IPR005722">
    <property type="entry name" value="ATP_synth_F1_bsu"/>
</dbReference>
<dbReference type="InterPro" id="IPR020003">
    <property type="entry name" value="ATPase_a/bsu_AS"/>
</dbReference>
<dbReference type="InterPro" id="IPR050053">
    <property type="entry name" value="ATPase_alpha/beta_chains"/>
</dbReference>
<dbReference type="InterPro" id="IPR004100">
    <property type="entry name" value="ATPase_F1/V1/A1_a/bsu_N"/>
</dbReference>
<dbReference type="InterPro" id="IPR036121">
    <property type="entry name" value="ATPase_F1/V1/A1_a/bsu_N_sf"/>
</dbReference>
<dbReference type="InterPro" id="IPR000194">
    <property type="entry name" value="ATPase_F1/V1/A1_a/bsu_nucl-bd"/>
</dbReference>
<dbReference type="InterPro" id="IPR024034">
    <property type="entry name" value="ATPase_F1/V1_b/a_C"/>
</dbReference>
<dbReference type="InterPro" id="IPR027417">
    <property type="entry name" value="P-loop_NTPase"/>
</dbReference>
<dbReference type="NCBIfam" id="TIGR01039">
    <property type="entry name" value="atpD"/>
    <property type="match status" value="1"/>
</dbReference>
<dbReference type="PANTHER" id="PTHR15184">
    <property type="entry name" value="ATP SYNTHASE"/>
    <property type="match status" value="1"/>
</dbReference>
<dbReference type="PANTHER" id="PTHR15184:SF71">
    <property type="entry name" value="ATP SYNTHASE SUBUNIT BETA, MITOCHONDRIAL"/>
    <property type="match status" value="1"/>
</dbReference>
<dbReference type="Pfam" id="PF00006">
    <property type="entry name" value="ATP-synt_ab"/>
    <property type="match status" value="1"/>
</dbReference>
<dbReference type="Pfam" id="PF02874">
    <property type="entry name" value="ATP-synt_ab_N"/>
    <property type="match status" value="1"/>
</dbReference>
<dbReference type="Pfam" id="PF22919">
    <property type="entry name" value="ATP-synt_VA_C"/>
    <property type="match status" value="1"/>
</dbReference>
<dbReference type="SMART" id="SM00382">
    <property type="entry name" value="AAA"/>
    <property type="match status" value="1"/>
</dbReference>
<dbReference type="SUPFAM" id="SSF47917">
    <property type="entry name" value="C-terminal domain of alpha and beta subunits of F1 ATP synthase"/>
    <property type="match status" value="1"/>
</dbReference>
<dbReference type="SUPFAM" id="SSF50615">
    <property type="entry name" value="N-terminal domain of alpha and beta subunits of F1 ATP synthase"/>
    <property type="match status" value="1"/>
</dbReference>
<dbReference type="SUPFAM" id="SSF52540">
    <property type="entry name" value="P-loop containing nucleoside triphosphate hydrolases"/>
    <property type="match status" value="1"/>
</dbReference>
<dbReference type="PROSITE" id="PS00152">
    <property type="entry name" value="ATPASE_ALPHA_BETA"/>
    <property type="match status" value="1"/>
</dbReference>
<feature type="chain" id="PRO_0000254379" description="ATP synthase subunit beta">
    <location>
        <begin position="1"/>
        <end position="460"/>
    </location>
</feature>
<feature type="binding site" evidence="1">
    <location>
        <begin position="150"/>
        <end position="157"/>
    </location>
    <ligand>
        <name>ATP</name>
        <dbReference type="ChEBI" id="CHEBI:30616"/>
    </ligand>
</feature>
<evidence type="ECO:0000255" key="1">
    <source>
        <dbReference type="HAMAP-Rule" id="MF_01347"/>
    </source>
</evidence>
<accession>Q2NQ86</accession>
<keyword id="KW-0066">ATP synthesis</keyword>
<keyword id="KW-0067">ATP-binding</keyword>
<keyword id="KW-0997">Cell inner membrane</keyword>
<keyword id="KW-1003">Cell membrane</keyword>
<keyword id="KW-0139">CF(1)</keyword>
<keyword id="KW-0375">Hydrogen ion transport</keyword>
<keyword id="KW-0406">Ion transport</keyword>
<keyword id="KW-0472">Membrane</keyword>
<keyword id="KW-0547">Nucleotide-binding</keyword>
<keyword id="KW-1278">Translocase</keyword>
<keyword id="KW-0813">Transport</keyword>
<proteinExistence type="inferred from homology"/>
<reference key="1">
    <citation type="journal article" date="2006" name="Genome Res.">
        <title>Massive genome erosion and functional adaptations provide insights into the symbiotic lifestyle of Sodalis glossinidius in the tsetse host.</title>
        <authorList>
            <person name="Toh H."/>
            <person name="Weiss B.L."/>
            <person name="Perkin S.A.H."/>
            <person name="Yamashita A."/>
            <person name="Oshima K."/>
            <person name="Hattori M."/>
            <person name="Aksoy S."/>
        </authorList>
    </citation>
    <scope>NUCLEOTIDE SEQUENCE [LARGE SCALE GENOMIC DNA]</scope>
    <source>
        <strain>morsitans</strain>
    </source>
</reference>
<organism>
    <name type="scientific">Sodalis glossinidius (strain morsitans)</name>
    <dbReference type="NCBI Taxonomy" id="343509"/>
    <lineage>
        <taxon>Bacteria</taxon>
        <taxon>Pseudomonadati</taxon>
        <taxon>Pseudomonadota</taxon>
        <taxon>Gammaproteobacteria</taxon>
        <taxon>Enterobacterales</taxon>
        <taxon>Bruguierivoracaceae</taxon>
        <taxon>Sodalis</taxon>
    </lineage>
</organism>
<sequence length="460" mass="50049">MATGNVIQVIGAVVDVEFPQDAVPKVYNALEVENGAAKLVLEVEQQLGGGVVRCIAMGSSDGLRRGLKVTDLERAIEVPVGKATLGRIMNVLGEPVDMKGDIGEEERWSIHRPAPSYEELASSQDLLETGIKVIDLMCPFAKGGKVGLFGGAGVGKTVNMMELIRNIAIEHSGYSVFAGVGERTREGNDFYHEMTDSNVIDKVSLVYGQMNEPPGNRLRVALTGLTMAEKFRDEGRDVLLFIDNIYRYTLAGTEVSALLGRMPSAVGYQPTLAEEMGVLQERITSTKTGSITSVQAVYVPADDLTDPSPATTFAHLDATVVLSRQIASLGIYPAVDPLDSTSRQLDPLVVGQEHYDVARGVQSILQRYQELKDIIAILGMDELSEDDKLVVSRARKIQRFLSQPFFVAEVFTGSPGKYVALKDTIRGFKGIMDGEYDHLPEQAFYMVGSIDEAVEKGKKL</sequence>
<name>ATPB_SODGM</name>
<comment type="function">
    <text evidence="1">Produces ATP from ADP in the presence of a proton gradient across the membrane. The catalytic sites are hosted primarily by the beta subunits.</text>
</comment>
<comment type="catalytic activity">
    <reaction evidence="1">
        <text>ATP + H2O + 4 H(+)(in) = ADP + phosphate + 5 H(+)(out)</text>
        <dbReference type="Rhea" id="RHEA:57720"/>
        <dbReference type="ChEBI" id="CHEBI:15377"/>
        <dbReference type="ChEBI" id="CHEBI:15378"/>
        <dbReference type="ChEBI" id="CHEBI:30616"/>
        <dbReference type="ChEBI" id="CHEBI:43474"/>
        <dbReference type="ChEBI" id="CHEBI:456216"/>
        <dbReference type="EC" id="7.1.2.2"/>
    </reaction>
</comment>
<comment type="subunit">
    <text evidence="1">F-type ATPases have 2 components, CF(1) - the catalytic core - and CF(0) - the membrane proton channel. CF(1) has five subunits: alpha(3), beta(3), gamma(1), delta(1), epsilon(1). CF(0) has three main subunits: a(1), b(2) and c(9-12). The alpha and beta chains form an alternating ring which encloses part of the gamma chain. CF(1) is attached to CF(0) by a central stalk formed by the gamma and epsilon chains, while a peripheral stalk is formed by the delta and b chains.</text>
</comment>
<comment type="subcellular location">
    <subcellularLocation>
        <location evidence="1">Cell inner membrane</location>
        <topology evidence="1">Peripheral membrane protein</topology>
    </subcellularLocation>
</comment>
<comment type="similarity">
    <text evidence="1">Belongs to the ATPase alpha/beta chains family.</text>
</comment>
<gene>
    <name evidence="1" type="primary">atpD</name>
    <name type="ordered locus">SG2414</name>
</gene>
<protein>
    <recommendedName>
        <fullName evidence="1">ATP synthase subunit beta</fullName>
        <ecNumber evidence="1">7.1.2.2</ecNumber>
    </recommendedName>
    <alternativeName>
        <fullName evidence="1">ATP synthase F1 sector subunit beta</fullName>
    </alternativeName>
    <alternativeName>
        <fullName evidence="1">F-ATPase subunit beta</fullName>
    </alternativeName>
</protein>